<comment type="function">
    <text evidence="1">Na(+)/H(+) antiporter that extrudes sodium in exchange for external protons.</text>
</comment>
<comment type="catalytic activity">
    <reaction evidence="1">
        <text>Na(+)(in) + 2 H(+)(out) = Na(+)(out) + 2 H(+)(in)</text>
        <dbReference type="Rhea" id="RHEA:29251"/>
        <dbReference type="ChEBI" id="CHEBI:15378"/>
        <dbReference type="ChEBI" id="CHEBI:29101"/>
    </reaction>
    <physiologicalReaction direction="left-to-right" evidence="1">
        <dbReference type="Rhea" id="RHEA:29252"/>
    </physiologicalReaction>
</comment>
<comment type="subcellular location">
    <subcellularLocation>
        <location evidence="1">Cell inner membrane</location>
        <topology evidence="1">Multi-pass membrane protein</topology>
    </subcellularLocation>
</comment>
<comment type="similarity">
    <text evidence="1">Belongs to the NhaA Na(+)/H(+) (TC 2.A.33) antiporter family.</text>
</comment>
<name>NHAA_ACIF2</name>
<feature type="chain" id="PRO_1000188430" description="Na(+)/H(+) antiporter NhaA">
    <location>
        <begin position="1"/>
        <end position="436"/>
    </location>
</feature>
<feature type="transmembrane region" description="Helical" evidence="1">
    <location>
        <begin position="14"/>
        <end position="34"/>
    </location>
</feature>
<feature type="transmembrane region" description="Helical" evidence="1">
    <location>
        <begin position="59"/>
        <end position="79"/>
    </location>
</feature>
<feature type="transmembrane region" description="Helical" evidence="1">
    <location>
        <begin position="95"/>
        <end position="115"/>
    </location>
</feature>
<feature type="transmembrane region" description="Helical" evidence="1">
    <location>
        <begin position="125"/>
        <end position="145"/>
    </location>
</feature>
<feature type="transmembrane region" description="Helical" evidence="1">
    <location>
        <begin position="152"/>
        <end position="172"/>
    </location>
</feature>
<feature type="transmembrane region" description="Helical" evidence="1">
    <location>
        <begin position="176"/>
        <end position="196"/>
    </location>
</feature>
<feature type="transmembrane region" description="Helical" evidence="1">
    <location>
        <begin position="214"/>
        <end position="234"/>
    </location>
</feature>
<feature type="transmembrane region" description="Helical" evidence="1">
    <location>
        <begin position="300"/>
        <end position="320"/>
    </location>
</feature>
<feature type="transmembrane region" description="Helical" evidence="1">
    <location>
        <begin position="336"/>
        <end position="356"/>
    </location>
</feature>
<feature type="transmembrane region" description="Helical" evidence="1">
    <location>
        <begin position="374"/>
        <end position="394"/>
    </location>
</feature>
<feature type="transmembrane region" description="Helical" evidence="1">
    <location>
        <begin position="407"/>
        <end position="427"/>
    </location>
</feature>
<keyword id="KW-0050">Antiport</keyword>
<keyword id="KW-0997">Cell inner membrane</keyword>
<keyword id="KW-1003">Cell membrane</keyword>
<keyword id="KW-0406">Ion transport</keyword>
<keyword id="KW-0472">Membrane</keyword>
<keyword id="KW-1185">Reference proteome</keyword>
<keyword id="KW-0915">Sodium</keyword>
<keyword id="KW-0739">Sodium transport</keyword>
<keyword id="KW-0812">Transmembrane</keyword>
<keyword id="KW-1133">Transmembrane helix</keyword>
<keyword id="KW-0813">Transport</keyword>
<proteinExistence type="inferred from homology"/>
<sequence>MLSPFEQFLRRATAGGIVLIAATILTLILSNSTWHTAYHAFWEQHLSLRWGNWIFDQSLHHWINDGLMAVFFFVVGLELKREFLVGELSSLRDAALPVIAALGGMLAPALIYHQFNPTGPAADGWGIPMATDIAFAIGILVLLAWRIPRNLIIFLTALAIADDLGAVLVIAIFYTPALHIKALMIAALLLLALLLFNRSGVRHTLPYLLVGLPFWYFVILSGIHATVAGIFLAFTIPARGRILPDELADNLSAHGQHLRDTITHSKRLNPLVNGQLAGIIQDIRNLSVAALAPQQRLEHAIQPWVTFAVLPVFALANAGINFAHISVNMLFSSVTIGTCLGLVLGKFLGIGLSSWLAVRLKIARLPAGVRWRHLLGAAWLGGIGFTMSLFIGQLAFGDPRLREEAKLGILLASLIAASIGLLWLFQVSRKKGDVPA</sequence>
<accession>B7J5J3</accession>
<reference key="1">
    <citation type="journal article" date="2008" name="BMC Genomics">
        <title>Acidithiobacillus ferrooxidans metabolism: from genome sequence to industrial applications.</title>
        <authorList>
            <person name="Valdes J."/>
            <person name="Pedroso I."/>
            <person name="Quatrini R."/>
            <person name="Dodson R.J."/>
            <person name="Tettelin H."/>
            <person name="Blake R. II"/>
            <person name="Eisen J.A."/>
            <person name="Holmes D.S."/>
        </authorList>
    </citation>
    <scope>NUCLEOTIDE SEQUENCE [LARGE SCALE GENOMIC DNA]</scope>
    <source>
        <strain>ATCC 23270 / DSM 14882 / CIP 104768 / NCIMB 8455</strain>
    </source>
</reference>
<dbReference type="EMBL" id="CP001219">
    <property type="protein sequence ID" value="ACK79003.1"/>
    <property type="molecule type" value="Genomic_DNA"/>
</dbReference>
<dbReference type="SMR" id="B7J5J3"/>
<dbReference type="STRING" id="243159.AFE_2205"/>
<dbReference type="PaxDb" id="243159-AFE_2205"/>
<dbReference type="KEGG" id="afr:AFE_2205"/>
<dbReference type="eggNOG" id="COG3004">
    <property type="taxonomic scope" value="Bacteria"/>
</dbReference>
<dbReference type="HOGENOM" id="CLU_015803_1_2_6"/>
<dbReference type="Proteomes" id="UP000001362">
    <property type="component" value="Chromosome"/>
</dbReference>
<dbReference type="GO" id="GO:0005886">
    <property type="term" value="C:plasma membrane"/>
    <property type="evidence" value="ECO:0007669"/>
    <property type="project" value="UniProtKB-SubCell"/>
</dbReference>
<dbReference type="GO" id="GO:0015385">
    <property type="term" value="F:sodium:proton antiporter activity"/>
    <property type="evidence" value="ECO:0007669"/>
    <property type="project" value="TreeGrafter"/>
</dbReference>
<dbReference type="GO" id="GO:0006885">
    <property type="term" value="P:regulation of pH"/>
    <property type="evidence" value="ECO:0007669"/>
    <property type="project" value="InterPro"/>
</dbReference>
<dbReference type="Gene3D" id="1.20.1530.10">
    <property type="entry name" value="Na+/H+ antiporter like domain"/>
    <property type="match status" value="1"/>
</dbReference>
<dbReference type="HAMAP" id="MF_01844">
    <property type="entry name" value="NhaA"/>
    <property type="match status" value="1"/>
</dbReference>
<dbReference type="InterPro" id="IPR023171">
    <property type="entry name" value="Na/H_antiporter_dom_sf"/>
</dbReference>
<dbReference type="InterPro" id="IPR004670">
    <property type="entry name" value="NhaA"/>
</dbReference>
<dbReference type="NCBIfam" id="TIGR00773">
    <property type="entry name" value="NhaA"/>
    <property type="match status" value="1"/>
</dbReference>
<dbReference type="PANTHER" id="PTHR30341:SF0">
    <property type="entry name" value="NA(+)_H(+) ANTIPORTER NHAA"/>
    <property type="match status" value="1"/>
</dbReference>
<dbReference type="PANTHER" id="PTHR30341">
    <property type="entry name" value="SODIUM ION/PROTON ANTIPORTER NHAA-RELATED"/>
    <property type="match status" value="1"/>
</dbReference>
<dbReference type="Pfam" id="PF06965">
    <property type="entry name" value="Na_H_antiport_1"/>
    <property type="match status" value="1"/>
</dbReference>
<protein>
    <recommendedName>
        <fullName evidence="1">Na(+)/H(+) antiporter NhaA</fullName>
    </recommendedName>
    <alternativeName>
        <fullName evidence="1">Sodium/proton antiporter NhaA</fullName>
    </alternativeName>
</protein>
<evidence type="ECO:0000255" key="1">
    <source>
        <dbReference type="HAMAP-Rule" id="MF_01844"/>
    </source>
</evidence>
<organism>
    <name type="scientific">Acidithiobacillus ferrooxidans (strain ATCC 23270 / DSM 14882 / CIP 104768 / NCIMB 8455)</name>
    <name type="common">Ferrobacillus ferrooxidans (strain ATCC 23270)</name>
    <dbReference type="NCBI Taxonomy" id="243159"/>
    <lineage>
        <taxon>Bacteria</taxon>
        <taxon>Pseudomonadati</taxon>
        <taxon>Pseudomonadota</taxon>
        <taxon>Acidithiobacillia</taxon>
        <taxon>Acidithiobacillales</taxon>
        <taxon>Acidithiobacillaceae</taxon>
        <taxon>Acidithiobacillus</taxon>
    </lineage>
</organism>
<gene>
    <name evidence="1" type="primary">nhaA</name>
    <name type="ordered locus">AFE_2205</name>
</gene>